<dbReference type="EC" id="4.2.1.10" evidence="1"/>
<dbReference type="EMBL" id="AE002098">
    <property type="protein sequence ID" value="AAF41806.1"/>
    <property type="molecule type" value="Genomic_DNA"/>
</dbReference>
<dbReference type="PIR" id="G81082">
    <property type="entry name" value="G81082"/>
</dbReference>
<dbReference type="RefSeq" id="NP_274458.1">
    <property type="nucleotide sequence ID" value="NC_003112.2"/>
</dbReference>
<dbReference type="RefSeq" id="WP_002239900.1">
    <property type="nucleotide sequence ID" value="NC_003112.2"/>
</dbReference>
<dbReference type="SMR" id="Q9JYT0"/>
<dbReference type="FunCoup" id="Q9JYT0">
    <property type="interactions" value="103"/>
</dbReference>
<dbReference type="STRING" id="122586.NMB1446"/>
<dbReference type="PaxDb" id="122586-NMB1446"/>
<dbReference type="KEGG" id="nme:NMB1446"/>
<dbReference type="PATRIC" id="fig|122586.8.peg.1822"/>
<dbReference type="HOGENOM" id="CLU_064444_0_0_4"/>
<dbReference type="InParanoid" id="Q9JYT0"/>
<dbReference type="OrthoDB" id="9813659at2"/>
<dbReference type="UniPathway" id="UPA00053">
    <property type="reaction ID" value="UER00086"/>
</dbReference>
<dbReference type="Proteomes" id="UP000000425">
    <property type="component" value="Chromosome"/>
</dbReference>
<dbReference type="GO" id="GO:0003855">
    <property type="term" value="F:3-dehydroquinate dehydratase activity"/>
    <property type="evidence" value="ECO:0000318"/>
    <property type="project" value="GO_Central"/>
</dbReference>
<dbReference type="GO" id="GO:0046279">
    <property type="term" value="P:3,4-dihydroxybenzoate biosynthetic process"/>
    <property type="evidence" value="ECO:0000318"/>
    <property type="project" value="GO_Central"/>
</dbReference>
<dbReference type="GO" id="GO:0008652">
    <property type="term" value="P:amino acid biosynthetic process"/>
    <property type="evidence" value="ECO:0007669"/>
    <property type="project" value="UniProtKB-KW"/>
</dbReference>
<dbReference type="GO" id="GO:0009073">
    <property type="term" value="P:aromatic amino acid family biosynthetic process"/>
    <property type="evidence" value="ECO:0007669"/>
    <property type="project" value="UniProtKB-KW"/>
</dbReference>
<dbReference type="GO" id="GO:0009423">
    <property type="term" value="P:chorismate biosynthetic process"/>
    <property type="evidence" value="ECO:0007669"/>
    <property type="project" value="UniProtKB-UniRule"/>
</dbReference>
<dbReference type="CDD" id="cd00502">
    <property type="entry name" value="DHQase_I"/>
    <property type="match status" value="1"/>
</dbReference>
<dbReference type="FunFam" id="3.20.20.70:FF:000047">
    <property type="entry name" value="3-dehydroquinate dehydratase"/>
    <property type="match status" value="1"/>
</dbReference>
<dbReference type="Gene3D" id="3.20.20.70">
    <property type="entry name" value="Aldolase class I"/>
    <property type="match status" value="1"/>
</dbReference>
<dbReference type="HAMAP" id="MF_00214">
    <property type="entry name" value="AroD"/>
    <property type="match status" value="1"/>
</dbReference>
<dbReference type="InterPro" id="IPR013785">
    <property type="entry name" value="Aldolase_TIM"/>
</dbReference>
<dbReference type="InterPro" id="IPR001381">
    <property type="entry name" value="DHquinase_I"/>
</dbReference>
<dbReference type="InterPro" id="IPR050146">
    <property type="entry name" value="Type-I_3-dehydroquinase"/>
</dbReference>
<dbReference type="NCBIfam" id="TIGR01093">
    <property type="entry name" value="aroD"/>
    <property type="match status" value="1"/>
</dbReference>
<dbReference type="PANTHER" id="PTHR43699">
    <property type="entry name" value="3-DEHYDROQUINATE DEHYDRATASE"/>
    <property type="match status" value="1"/>
</dbReference>
<dbReference type="PANTHER" id="PTHR43699:SF1">
    <property type="entry name" value="3-DEHYDROQUINATE DEHYDRATASE"/>
    <property type="match status" value="1"/>
</dbReference>
<dbReference type="Pfam" id="PF01487">
    <property type="entry name" value="DHquinase_I"/>
    <property type="match status" value="1"/>
</dbReference>
<dbReference type="SUPFAM" id="SSF51569">
    <property type="entry name" value="Aldolase"/>
    <property type="match status" value="1"/>
</dbReference>
<protein>
    <recommendedName>
        <fullName evidence="1">3-dehydroquinate dehydratase</fullName>
        <shortName evidence="1">3-dehydroquinase</shortName>
        <ecNumber evidence="1">4.2.1.10</ecNumber>
    </recommendedName>
    <alternativeName>
        <fullName evidence="1">Type I DHQase</fullName>
    </alternativeName>
    <alternativeName>
        <fullName evidence="1">Type I dehydroquinase</fullName>
        <shortName evidence="1">DHQ1</shortName>
    </alternativeName>
</protein>
<feature type="chain" id="PRO_0000138803" description="3-dehydroquinate dehydratase">
    <location>
        <begin position="1"/>
        <end position="254"/>
    </location>
</feature>
<feature type="active site" description="Proton donor/acceptor" evidence="1">
    <location>
        <position position="144"/>
    </location>
</feature>
<feature type="active site" description="Schiff-base intermediate with substrate" evidence="1">
    <location>
        <position position="171"/>
    </location>
</feature>
<feature type="binding site" evidence="1">
    <location>
        <begin position="47"/>
        <end position="49"/>
    </location>
    <ligand>
        <name>3-dehydroquinate</name>
        <dbReference type="ChEBI" id="CHEBI:32364"/>
    </ligand>
</feature>
<feature type="binding site" evidence="1">
    <location>
        <position position="83"/>
    </location>
    <ligand>
        <name>3-dehydroquinate</name>
        <dbReference type="ChEBI" id="CHEBI:32364"/>
    </ligand>
</feature>
<feature type="binding site" evidence="1">
    <location>
        <position position="213"/>
    </location>
    <ligand>
        <name>3-dehydroquinate</name>
        <dbReference type="ChEBI" id="CHEBI:32364"/>
    </ligand>
</feature>
<feature type="binding site" evidence="1">
    <location>
        <position position="232"/>
    </location>
    <ligand>
        <name>3-dehydroquinate</name>
        <dbReference type="ChEBI" id="CHEBI:32364"/>
    </ligand>
</feature>
<feature type="binding site" evidence="1">
    <location>
        <position position="236"/>
    </location>
    <ligand>
        <name>3-dehydroquinate</name>
        <dbReference type="ChEBI" id="CHEBI:32364"/>
    </ligand>
</feature>
<sequence length="254" mass="27186">MCSCLVVKNTVIGSGRTKIAVPLVARDAAELSAVLEQIKNMPFDIAEFRADFLECAGSIGEILHHTQTVRDALPDKPLLFTFRRHGEGGSFPCSDDYYFELLDALIESRLPDIIDIELFSGETAVRCAVANAQKNGIAALLCNHEFHRTPPQEEIVCRLKQMEDCGADICKIAVMPQSAEDVLTLLSATLKAKELAAKPIVTMSMGQTGAVSRLAGQVFGSSITFGSGTQNSAPGQIGVSALRATLDCLENGAD</sequence>
<keyword id="KW-0028">Amino-acid biosynthesis</keyword>
<keyword id="KW-0057">Aromatic amino acid biosynthesis</keyword>
<keyword id="KW-0456">Lyase</keyword>
<keyword id="KW-1185">Reference proteome</keyword>
<keyword id="KW-0704">Schiff base</keyword>
<name>AROD_NEIMB</name>
<comment type="function">
    <text evidence="1">Involved in the third step of the chorismate pathway, which leads to the biosynthesis of aromatic amino acids. Catalyzes the cis-dehydration of 3-dehydroquinate (DHQ) and introduces the first double bond of the aromatic ring to yield 3-dehydroshikimate.</text>
</comment>
<comment type="catalytic activity">
    <reaction evidence="1">
        <text>3-dehydroquinate = 3-dehydroshikimate + H2O</text>
        <dbReference type="Rhea" id="RHEA:21096"/>
        <dbReference type="ChEBI" id="CHEBI:15377"/>
        <dbReference type="ChEBI" id="CHEBI:16630"/>
        <dbReference type="ChEBI" id="CHEBI:32364"/>
        <dbReference type="EC" id="4.2.1.10"/>
    </reaction>
</comment>
<comment type="pathway">
    <text evidence="1">Metabolic intermediate biosynthesis; chorismate biosynthesis; chorismate from D-erythrose 4-phosphate and phosphoenolpyruvate: step 3/7.</text>
</comment>
<comment type="subunit">
    <text evidence="1">Homodimer.</text>
</comment>
<comment type="similarity">
    <text evidence="1">Belongs to the type-I 3-dehydroquinase family.</text>
</comment>
<gene>
    <name evidence="1" type="primary">aroD</name>
    <name type="ordered locus">NMB1446</name>
</gene>
<organism>
    <name type="scientific">Neisseria meningitidis serogroup B (strain ATCC BAA-335 / MC58)</name>
    <dbReference type="NCBI Taxonomy" id="122586"/>
    <lineage>
        <taxon>Bacteria</taxon>
        <taxon>Pseudomonadati</taxon>
        <taxon>Pseudomonadota</taxon>
        <taxon>Betaproteobacteria</taxon>
        <taxon>Neisseriales</taxon>
        <taxon>Neisseriaceae</taxon>
        <taxon>Neisseria</taxon>
    </lineage>
</organism>
<evidence type="ECO:0000255" key="1">
    <source>
        <dbReference type="HAMAP-Rule" id="MF_00214"/>
    </source>
</evidence>
<proteinExistence type="inferred from homology"/>
<accession>Q9JYT0</accession>
<reference key="1">
    <citation type="journal article" date="2000" name="Science">
        <title>Complete genome sequence of Neisseria meningitidis serogroup B strain MC58.</title>
        <authorList>
            <person name="Tettelin H."/>
            <person name="Saunders N.J."/>
            <person name="Heidelberg J.F."/>
            <person name="Jeffries A.C."/>
            <person name="Nelson K.E."/>
            <person name="Eisen J.A."/>
            <person name="Ketchum K.A."/>
            <person name="Hood D.W."/>
            <person name="Peden J.F."/>
            <person name="Dodson R.J."/>
            <person name="Nelson W.C."/>
            <person name="Gwinn M.L."/>
            <person name="DeBoy R.T."/>
            <person name="Peterson J.D."/>
            <person name="Hickey E.K."/>
            <person name="Haft D.H."/>
            <person name="Salzberg S.L."/>
            <person name="White O."/>
            <person name="Fleischmann R.D."/>
            <person name="Dougherty B.A."/>
            <person name="Mason T.M."/>
            <person name="Ciecko A."/>
            <person name="Parksey D.S."/>
            <person name="Blair E."/>
            <person name="Cittone H."/>
            <person name="Clark E.B."/>
            <person name="Cotton M.D."/>
            <person name="Utterback T.R."/>
            <person name="Khouri H.M."/>
            <person name="Qin H."/>
            <person name="Vamathevan J.J."/>
            <person name="Gill J."/>
            <person name="Scarlato V."/>
            <person name="Masignani V."/>
            <person name="Pizza M."/>
            <person name="Grandi G."/>
            <person name="Sun L."/>
            <person name="Smith H.O."/>
            <person name="Fraser C.M."/>
            <person name="Moxon E.R."/>
            <person name="Rappuoli R."/>
            <person name="Venter J.C."/>
        </authorList>
    </citation>
    <scope>NUCLEOTIDE SEQUENCE [LARGE SCALE GENOMIC DNA]</scope>
    <source>
        <strain>ATCC BAA-335 / MC58</strain>
    </source>
</reference>